<reference key="1">
    <citation type="submission" date="2000-06" db="EMBL/GenBank/DDBJ databases">
        <title>A novel human carcinoma-associated gene.</title>
        <authorList>
            <person name="Chen J.X."/>
            <person name="Ying K."/>
            <person name="Xie Y."/>
            <person name="Mao Y.M."/>
        </authorList>
    </citation>
    <scope>NUCLEOTIDE SEQUENCE [MRNA] (ISOFORM 1)</scope>
</reference>
<reference key="2">
    <citation type="journal article" date="2004" name="Nat. Genet.">
        <title>Complete sequencing and characterization of 21,243 full-length human cDNAs.</title>
        <authorList>
            <person name="Ota T."/>
            <person name="Suzuki Y."/>
            <person name="Nishikawa T."/>
            <person name="Otsuki T."/>
            <person name="Sugiyama T."/>
            <person name="Irie R."/>
            <person name="Wakamatsu A."/>
            <person name="Hayashi K."/>
            <person name="Sato H."/>
            <person name="Nagai K."/>
            <person name="Kimura K."/>
            <person name="Makita H."/>
            <person name="Sekine M."/>
            <person name="Obayashi M."/>
            <person name="Nishi T."/>
            <person name="Shibahara T."/>
            <person name="Tanaka T."/>
            <person name="Ishii S."/>
            <person name="Yamamoto J."/>
            <person name="Saito K."/>
            <person name="Kawai Y."/>
            <person name="Isono Y."/>
            <person name="Nakamura Y."/>
            <person name="Nagahari K."/>
            <person name="Murakami K."/>
            <person name="Yasuda T."/>
            <person name="Iwayanagi T."/>
            <person name="Wagatsuma M."/>
            <person name="Shiratori A."/>
            <person name="Sudo H."/>
            <person name="Hosoiri T."/>
            <person name="Kaku Y."/>
            <person name="Kodaira H."/>
            <person name="Kondo H."/>
            <person name="Sugawara M."/>
            <person name="Takahashi M."/>
            <person name="Kanda K."/>
            <person name="Yokoi T."/>
            <person name="Furuya T."/>
            <person name="Kikkawa E."/>
            <person name="Omura Y."/>
            <person name="Abe K."/>
            <person name="Kamihara K."/>
            <person name="Katsuta N."/>
            <person name="Sato K."/>
            <person name="Tanikawa M."/>
            <person name="Yamazaki M."/>
            <person name="Ninomiya K."/>
            <person name="Ishibashi T."/>
            <person name="Yamashita H."/>
            <person name="Murakawa K."/>
            <person name="Fujimori K."/>
            <person name="Tanai H."/>
            <person name="Kimata M."/>
            <person name="Watanabe M."/>
            <person name="Hiraoka S."/>
            <person name="Chiba Y."/>
            <person name="Ishida S."/>
            <person name="Ono Y."/>
            <person name="Takiguchi S."/>
            <person name="Watanabe S."/>
            <person name="Yosida M."/>
            <person name="Hotuta T."/>
            <person name="Kusano J."/>
            <person name="Kanehori K."/>
            <person name="Takahashi-Fujii A."/>
            <person name="Hara H."/>
            <person name="Tanase T.-O."/>
            <person name="Nomura Y."/>
            <person name="Togiya S."/>
            <person name="Komai F."/>
            <person name="Hara R."/>
            <person name="Takeuchi K."/>
            <person name="Arita M."/>
            <person name="Imose N."/>
            <person name="Musashino K."/>
            <person name="Yuuki H."/>
            <person name="Oshima A."/>
            <person name="Sasaki N."/>
            <person name="Aotsuka S."/>
            <person name="Yoshikawa Y."/>
            <person name="Matsunawa H."/>
            <person name="Ichihara T."/>
            <person name="Shiohata N."/>
            <person name="Sano S."/>
            <person name="Moriya S."/>
            <person name="Momiyama H."/>
            <person name="Satoh N."/>
            <person name="Takami S."/>
            <person name="Terashima Y."/>
            <person name="Suzuki O."/>
            <person name="Nakagawa S."/>
            <person name="Senoh A."/>
            <person name="Mizoguchi H."/>
            <person name="Goto Y."/>
            <person name="Shimizu F."/>
            <person name="Wakebe H."/>
            <person name="Hishigaki H."/>
            <person name="Watanabe T."/>
            <person name="Sugiyama A."/>
            <person name="Takemoto M."/>
            <person name="Kawakami B."/>
            <person name="Yamazaki M."/>
            <person name="Watanabe K."/>
            <person name="Kumagai A."/>
            <person name="Itakura S."/>
            <person name="Fukuzumi Y."/>
            <person name="Fujimori Y."/>
            <person name="Komiyama M."/>
            <person name="Tashiro H."/>
            <person name="Tanigami A."/>
            <person name="Fujiwara T."/>
            <person name="Ono T."/>
            <person name="Yamada K."/>
            <person name="Fujii Y."/>
            <person name="Ozaki K."/>
            <person name="Hirao M."/>
            <person name="Ohmori Y."/>
            <person name="Kawabata A."/>
            <person name="Hikiji T."/>
            <person name="Kobatake N."/>
            <person name="Inagaki H."/>
            <person name="Ikema Y."/>
            <person name="Okamoto S."/>
            <person name="Okitani R."/>
            <person name="Kawakami T."/>
            <person name="Noguchi S."/>
            <person name="Itoh T."/>
            <person name="Shigeta K."/>
            <person name="Senba T."/>
            <person name="Matsumura K."/>
            <person name="Nakajima Y."/>
            <person name="Mizuno T."/>
            <person name="Morinaga M."/>
            <person name="Sasaki M."/>
            <person name="Togashi T."/>
            <person name="Oyama M."/>
            <person name="Hata H."/>
            <person name="Watanabe M."/>
            <person name="Komatsu T."/>
            <person name="Mizushima-Sugano J."/>
            <person name="Satoh T."/>
            <person name="Shirai Y."/>
            <person name="Takahashi Y."/>
            <person name="Nakagawa K."/>
            <person name="Okumura K."/>
            <person name="Nagase T."/>
            <person name="Nomura N."/>
            <person name="Kikuchi H."/>
            <person name="Masuho Y."/>
            <person name="Yamashita R."/>
            <person name="Nakai K."/>
            <person name="Yada T."/>
            <person name="Nakamura Y."/>
            <person name="Ohara O."/>
            <person name="Isogai T."/>
            <person name="Sugano S."/>
        </authorList>
    </citation>
    <scope>NUCLEOTIDE SEQUENCE [LARGE SCALE MRNA] (ISOFORMS 1 AND 3)</scope>
    <source>
        <tissue>Brain</tissue>
    </source>
</reference>
<reference key="3">
    <citation type="journal article" date="2001" name="Nature">
        <title>The DNA sequence and comparative analysis of human chromosome 20.</title>
        <authorList>
            <person name="Deloukas P."/>
            <person name="Matthews L.H."/>
            <person name="Ashurst J.L."/>
            <person name="Burton J."/>
            <person name="Gilbert J.G.R."/>
            <person name="Jones M."/>
            <person name="Stavrides G."/>
            <person name="Almeida J.P."/>
            <person name="Babbage A.K."/>
            <person name="Bagguley C.L."/>
            <person name="Bailey J."/>
            <person name="Barlow K.F."/>
            <person name="Bates K.N."/>
            <person name="Beard L.M."/>
            <person name="Beare D.M."/>
            <person name="Beasley O.P."/>
            <person name="Bird C.P."/>
            <person name="Blakey S.E."/>
            <person name="Bridgeman A.M."/>
            <person name="Brown A.J."/>
            <person name="Buck D."/>
            <person name="Burrill W.D."/>
            <person name="Butler A.P."/>
            <person name="Carder C."/>
            <person name="Carter N.P."/>
            <person name="Chapman J.C."/>
            <person name="Clamp M."/>
            <person name="Clark G."/>
            <person name="Clark L.N."/>
            <person name="Clark S.Y."/>
            <person name="Clee C.M."/>
            <person name="Clegg S."/>
            <person name="Cobley V.E."/>
            <person name="Collier R.E."/>
            <person name="Connor R.E."/>
            <person name="Corby N.R."/>
            <person name="Coulson A."/>
            <person name="Coville G.J."/>
            <person name="Deadman R."/>
            <person name="Dhami P.D."/>
            <person name="Dunn M."/>
            <person name="Ellington A.G."/>
            <person name="Frankland J.A."/>
            <person name="Fraser A."/>
            <person name="French L."/>
            <person name="Garner P."/>
            <person name="Grafham D.V."/>
            <person name="Griffiths C."/>
            <person name="Griffiths M.N.D."/>
            <person name="Gwilliam R."/>
            <person name="Hall R.E."/>
            <person name="Hammond S."/>
            <person name="Harley J.L."/>
            <person name="Heath P.D."/>
            <person name="Ho S."/>
            <person name="Holden J.L."/>
            <person name="Howden P.J."/>
            <person name="Huckle E."/>
            <person name="Hunt A.R."/>
            <person name="Hunt S.E."/>
            <person name="Jekosch K."/>
            <person name="Johnson C.M."/>
            <person name="Johnson D."/>
            <person name="Kay M.P."/>
            <person name="Kimberley A.M."/>
            <person name="King A."/>
            <person name="Knights A."/>
            <person name="Laird G.K."/>
            <person name="Lawlor S."/>
            <person name="Lehvaeslaiho M.H."/>
            <person name="Leversha M.A."/>
            <person name="Lloyd C."/>
            <person name="Lloyd D.M."/>
            <person name="Lovell J.D."/>
            <person name="Marsh V.L."/>
            <person name="Martin S.L."/>
            <person name="McConnachie L.J."/>
            <person name="McLay K."/>
            <person name="McMurray A.A."/>
            <person name="Milne S.A."/>
            <person name="Mistry D."/>
            <person name="Moore M.J.F."/>
            <person name="Mullikin J.C."/>
            <person name="Nickerson T."/>
            <person name="Oliver K."/>
            <person name="Parker A."/>
            <person name="Patel R."/>
            <person name="Pearce T.A.V."/>
            <person name="Peck A.I."/>
            <person name="Phillimore B.J.C.T."/>
            <person name="Prathalingam S.R."/>
            <person name="Plumb R.W."/>
            <person name="Ramsay H."/>
            <person name="Rice C.M."/>
            <person name="Ross M.T."/>
            <person name="Scott C.E."/>
            <person name="Sehra H.K."/>
            <person name="Shownkeen R."/>
            <person name="Sims S."/>
            <person name="Skuce C.D."/>
            <person name="Smith M.L."/>
            <person name="Soderlund C."/>
            <person name="Steward C.A."/>
            <person name="Sulston J.E."/>
            <person name="Swann R.M."/>
            <person name="Sycamore N."/>
            <person name="Taylor R."/>
            <person name="Tee L."/>
            <person name="Thomas D.W."/>
            <person name="Thorpe A."/>
            <person name="Tracey A."/>
            <person name="Tromans A.C."/>
            <person name="Vaudin M."/>
            <person name="Wall M."/>
            <person name="Wallis J.M."/>
            <person name="Whitehead S.L."/>
            <person name="Whittaker P."/>
            <person name="Willey D.L."/>
            <person name="Williams L."/>
            <person name="Williams S.A."/>
            <person name="Wilming L."/>
            <person name="Wray P.W."/>
            <person name="Hubbard T."/>
            <person name="Durbin R.M."/>
            <person name="Bentley D.R."/>
            <person name="Beck S."/>
            <person name="Rogers J."/>
        </authorList>
    </citation>
    <scope>NUCLEOTIDE SEQUENCE [LARGE SCALE GENOMIC DNA]</scope>
</reference>
<reference key="4">
    <citation type="journal article" date="2004" name="Genome Res.">
        <title>The status, quality, and expansion of the NIH full-length cDNA project: the Mammalian Gene Collection (MGC).</title>
        <authorList>
            <consortium name="The MGC Project Team"/>
        </authorList>
    </citation>
    <scope>NUCLEOTIDE SEQUENCE [LARGE SCALE MRNA] (ISOFORM 1)</scope>
    <source>
        <tissue>Brain</tissue>
        <tissue>Eye</tissue>
    </source>
</reference>
<reference key="5">
    <citation type="journal article" date="2007" name="BMC Genomics">
        <title>The full-ORF clone resource of the German cDNA consortium.</title>
        <authorList>
            <person name="Bechtel S."/>
            <person name="Rosenfelder H."/>
            <person name="Duda A."/>
            <person name="Schmidt C.P."/>
            <person name="Ernst U."/>
            <person name="Wellenreuther R."/>
            <person name="Mehrle A."/>
            <person name="Schuster C."/>
            <person name="Bahr A."/>
            <person name="Bloecker H."/>
            <person name="Heubner D."/>
            <person name="Hoerlein A."/>
            <person name="Michel G."/>
            <person name="Wedler H."/>
            <person name="Koehrer K."/>
            <person name="Ottenwaelder B."/>
            <person name="Poustka A."/>
            <person name="Wiemann S."/>
            <person name="Schupp I."/>
        </authorList>
    </citation>
    <scope>NUCLEOTIDE SEQUENCE [LARGE SCALE MRNA] OF 213-367 (ISOFORM 1)</scope>
    <source>
        <tissue>Amygdala</tissue>
    </source>
</reference>
<reference key="6">
    <citation type="journal article" date="2006" name="Science">
        <title>The consensus coding sequences of human breast and colorectal cancers.</title>
        <authorList>
            <person name="Sjoeblom T."/>
            <person name="Jones S."/>
            <person name="Wood L.D."/>
            <person name="Parsons D.W."/>
            <person name="Lin J."/>
            <person name="Barber T.D."/>
            <person name="Mandelker D."/>
            <person name="Leary R.J."/>
            <person name="Ptak J."/>
            <person name="Silliman N."/>
            <person name="Szabo S."/>
            <person name="Buckhaults P."/>
            <person name="Farrell C."/>
            <person name="Meeh P."/>
            <person name="Markowitz S.D."/>
            <person name="Willis J."/>
            <person name="Dawson D."/>
            <person name="Willson J.K.V."/>
            <person name="Gazdar A.F."/>
            <person name="Hartigan J."/>
            <person name="Wu L."/>
            <person name="Liu C."/>
            <person name="Parmigiani G."/>
            <person name="Park B.H."/>
            <person name="Bachman K.E."/>
            <person name="Papadopoulos N."/>
            <person name="Vogelstein B."/>
            <person name="Kinzler K.W."/>
            <person name="Velculescu V.E."/>
        </authorList>
    </citation>
    <scope>VARIANT [LARGE SCALE ANALYSIS] TRP-141</scope>
</reference>
<accession>Q96MZ0</accession>
<accession>B7Z621</accession>
<accession>Q5TE60</accession>
<accession>Q68CW7</accession>
<accession>Q9BQJ7</accession>
<accession>Q9BQV4</accession>
<accession>Q9BWJ4</accession>
<accession>Q9H3Y2</accession>
<accession>Q9H4G5</accession>
<sequence>MATPNNLTPTNCSWWPISALESDAAKPAEAPDAPEAASPAHWPRESLVLYHWTQSFSSQKVRLVIAEKGLVCEERDVSLPQSEHKEPWFMRLNLGEEVPVIIHRDNIISDYDQIIDYVERTFTGEHVVALMPEVGSLQHARVLQYRELLDALPMDAYTHGCILHPELTTDSMIPKYATAEIRRHLANATTDLMKLDHEEEPQLSEPYLSKQKKLMAKILEHDDVSYLKKILGELAMVLDQIEAELEKRKLENEGQKCELWLCGCAFTLADVLLGATLHRLKFLGLSKKYWEDGSRPNLQSFFERVQRRFAFRKVLGDIHTTLLSAVIPNAFRLVKRKPPSFFGASFLMGSLGGMGYFAYWYLKKKYI</sequence>
<proteinExistence type="evidence at protein level"/>
<keyword id="KW-0025">Alternative splicing</keyword>
<keyword id="KW-0175">Coiled coil</keyword>
<keyword id="KW-1267">Proteomics identification</keyword>
<keyword id="KW-1185">Reference proteome</keyword>
<dbReference type="EMBL" id="AF277566">
    <property type="protein sequence ID" value="AAM73515.1"/>
    <property type="molecule type" value="mRNA"/>
</dbReference>
<dbReference type="EMBL" id="AK056251">
    <property type="protein sequence ID" value="BAB71128.1"/>
    <property type="molecule type" value="mRNA"/>
</dbReference>
<dbReference type="EMBL" id="AK299700">
    <property type="protein sequence ID" value="BAH13107.1"/>
    <property type="molecule type" value="mRNA"/>
</dbReference>
<dbReference type="EMBL" id="AL035462">
    <property type="status" value="NOT_ANNOTATED_CDS"/>
    <property type="molecule type" value="Genomic_DNA"/>
</dbReference>
<dbReference type="EMBL" id="AL117382">
    <property type="status" value="NOT_ANNOTATED_CDS"/>
    <property type="molecule type" value="Genomic_DNA"/>
</dbReference>
<dbReference type="EMBL" id="BC000199">
    <property type="protein sequence ID" value="AAH00199.1"/>
    <property type="molecule type" value="mRNA"/>
</dbReference>
<dbReference type="EMBL" id="BC009014">
    <property type="protein sequence ID" value="AAH09014.1"/>
    <property type="molecule type" value="mRNA"/>
</dbReference>
<dbReference type="EMBL" id="CR749676">
    <property type="protein sequence ID" value="CAH18467.1"/>
    <property type="molecule type" value="mRNA"/>
</dbReference>
<dbReference type="CCDS" id="CCDS13328.1">
    <molecule id="Q96MZ0-1"/>
</dbReference>
<dbReference type="CCDS" id="CCDS74725.1">
    <molecule id="Q96MZ0-4"/>
</dbReference>
<dbReference type="RefSeq" id="NP_001243666.1">
    <molecule id="Q96MZ0-4"/>
    <property type="nucleotide sequence ID" value="NM_001256737.2"/>
</dbReference>
<dbReference type="RefSeq" id="NP_001243667.1">
    <property type="nucleotide sequence ID" value="NM_001256738.1"/>
</dbReference>
<dbReference type="RefSeq" id="NP_001243668.1">
    <property type="nucleotide sequence ID" value="NM_001256739.1"/>
</dbReference>
<dbReference type="RefSeq" id="NP_001243669.1">
    <property type="nucleotide sequence ID" value="NM_001256740.1"/>
</dbReference>
<dbReference type="RefSeq" id="NP_076939.3">
    <molecule id="Q96MZ0-1"/>
    <property type="nucleotide sequence ID" value="NM_024034.4"/>
</dbReference>
<dbReference type="SASBDB" id="Q96MZ0"/>
<dbReference type="SMR" id="Q96MZ0"/>
<dbReference type="BioGRID" id="122468">
    <property type="interactions" value="3"/>
</dbReference>
<dbReference type="FunCoup" id="Q96MZ0">
    <property type="interactions" value="162"/>
</dbReference>
<dbReference type="IntAct" id="Q96MZ0">
    <property type="interactions" value="2"/>
</dbReference>
<dbReference type="STRING" id="9606.ENSP00000440498"/>
<dbReference type="iPTMnet" id="Q96MZ0"/>
<dbReference type="PhosphoSitePlus" id="Q96MZ0"/>
<dbReference type="BioMuta" id="GDAP1L1"/>
<dbReference type="DMDM" id="38257738"/>
<dbReference type="jPOST" id="Q96MZ0"/>
<dbReference type="MassIVE" id="Q96MZ0"/>
<dbReference type="PaxDb" id="9606-ENSP00000440498"/>
<dbReference type="PeptideAtlas" id="Q96MZ0"/>
<dbReference type="ProteomicsDB" id="77433">
    <molecule id="Q96MZ0-1"/>
</dbReference>
<dbReference type="ProteomicsDB" id="77434">
    <molecule id="Q96MZ0-2"/>
</dbReference>
<dbReference type="Antibodypedia" id="27351">
    <property type="antibodies" value="154 antibodies from 19 providers"/>
</dbReference>
<dbReference type="DNASU" id="78997"/>
<dbReference type="Ensembl" id="ENST00000342560.10">
    <molecule id="Q96MZ0-1"/>
    <property type="protein sequence ID" value="ENSP00000341782.5"/>
    <property type="gene ID" value="ENSG00000124194.17"/>
</dbReference>
<dbReference type="Ensembl" id="ENST00000372952.7">
    <molecule id="Q96MZ0-2"/>
    <property type="protein sequence ID" value="ENSP00000362043.3"/>
    <property type="gene ID" value="ENSG00000124194.17"/>
</dbReference>
<dbReference type="Ensembl" id="ENST00000537864.5">
    <molecule id="Q96MZ0-4"/>
    <property type="protein sequence ID" value="ENSP00000440498.2"/>
    <property type="gene ID" value="ENSG00000124194.17"/>
</dbReference>
<dbReference type="GeneID" id="78997"/>
<dbReference type="KEGG" id="hsa:78997"/>
<dbReference type="MANE-Select" id="ENST00000342560.10">
    <property type="protein sequence ID" value="ENSP00000341782.5"/>
    <property type="RefSeq nucleotide sequence ID" value="NM_024034.6"/>
    <property type="RefSeq protein sequence ID" value="NP_076939.3"/>
</dbReference>
<dbReference type="UCSC" id="uc002xlq.5">
    <molecule id="Q96MZ0-1"/>
    <property type="organism name" value="human"/>
</dbReference>
<dbReference type="AGR" id="HGNC:4213"/>
<dbReference type="CTD" id="78997"/>
<dbReference type="DisGeNET" id="78997"/>
<dbReference type="GeneCards" id="GDAP1L1"/>
<dbReference type="HGNC" id="HGNC:4213">
    <property type="gene designation" value="GDAP1L1"/>
</dbReference>
<dbReference type="HPA" id="ENSG00000124194">
    <property type="expression patterns" value="Group enriched (brain, pituitary gland)"/>
</dbReference>
<dbReference type="neXtProt" id="NX_Q96MZ0"/>
<dbReference type="OpenTargets" id="ENSG00000124194"/>
<dbReference type="PharmGKB" id="PA28627"/>
<dbReference type="VEuPathDB" id="HostDB:ENSG00000124194"/>
<dbReference type="eggNOG" id="KOG4420">
    <property type="taxonomic scope" value="Eukaryota"/>
</dbReference>
<dbReference type="GeneTree" id="ENSGT00940000160178"/>
<dbReference type="HOGENOM" id="CLU_049129_1_0_1"/>
<dbReference type="InParanoid" id="Q96MZ0"/>
<dbReference type="OMA" id="LKTWCFV"/>
<dbReference type="OrthoDB" id="249703at2759"/>
<dbReference type="PAN-GO" id="Q96MZ0">
    <property type="GO annotations" value="0 GO annotations based on evolutionary models"/>
</dbReference>
<dbReference type="PhylomeDB" id="Q96MZ0"/>
<dbReference type="TreeFam" id="TF327072"/>
<dbReference type="PathwayCommons" id="Q96MZ0"/>
<dbReference type="BioGRID-ORCS" id="78997">
    <property type="hits" value="9 hits in 1144 CRISPR screens"/>
</dbReference>
<dbReference type="CD-CODE" id="FB4E32DD">
    <property type="entry name" value="Presynaptic clusters and postsynaptic densities"/>
</dbReference>
<dbReference type="ChiTaRS" id="GDAP1L1">
    <property type="organism name" value="human"/>
</dbReference>
<dbReference type="GenomeRNAi" id="78997"/>
<dbReference type="Pharos" id="Q96MZ0">
    <property type="development level" value="Tdark"/>
</dbReference>
<dbReference type="PRO" id="PR:Q96MZ0"/>
<dbReference type="Proteomes" id="UP000005640">
    <property type="component" value="Chromosome 20"/>
</dbReference>
<dbReference type="RNAct" id="Q96MZ0">
    <property type="molecule type" value="protein"/>
</dbReference>
<dbReference type="Bgee" id="ENSG00000124194">
    <property type="expression patterns" value="Expressed in cortical plate and 123 other cell types or tissues"/>
</dbReference>
<dbReference type="ExpressionAtlas" id="Q96MZ0">
    <property type="expression patterns" value="baseline and differential"/>
</dbReference>
<dbReference type="GO" id="GO:0005739">
    <property type="term" value="C:mitochondrion"/>
    <property type="evidence" value="ECO:0006056"/>
    <property type="project" value="FlyBase"/>
</dbReference>
<dbReference type="CDD" id="cd03052">
    <property type="entry name" value="GST_N_GDAP1"/>
    <property type="match status" value="1"/>
</dbReference>
<dbReference type="FunFam" id="3.40.30.10:FF:000113">
    <property type="entry name" value="ganglioside-induced differentiation-associated protein 1 isoform X1"/>
    <property type="match status" value="1"/>
</dbReference>
<dbReference type="Gene3D" id="1.20.1050.10">
    <property type="match status" value="1"/>
</dbReference>
<dbReference type="Gene3D" id="3.40.30.10">
    <property type="entry name" value="Glutaredoxin"/>
    <property type="match status" value="1"/>
</dbReference>
<dbReference type="InterPro" id="IPR010987">
    <property type="entry name" value="Glutathione-S-Trfase_C-like"/>
</dbReference>
<dbReference type="InterPro" id="IPR036282">
    <property type="entry name" value="Glutathione-S-Trfase_C_sf"/>
</dbReference>
<dbReference type="InterPro" id="IPR004045">
    <property type="entry name" value="Glutathione_S-Trfase_N"/>
</dbReference>
<dbReference type="InterPro" id="IPR036249">
    <property type="entry name" value="Thioredoxin-like_sf"/>
</dbReference>
<dbReference type="PANTHER" id="PTHR44188:SF2">
    <property type="entry name" value="GANGLIOSIDE-INDUCED DIFFERENTIATION-ASSOCIATED PROTEIN 1-LIKE 1"/>
    <property type="match status" value="1"/>
</dbReference>
<dbReference type="PANTHER" id="PTHR44188">
    <property type="entry name" value="GDAP1, ISOFORM A"/>
    <property type="match status" value="1"/>
</dbReference>
<dbReference type="Pfam" id="PF13410">
    <property type="entry name" value="GST_C_2"/>
    <property type="match status" value="1"/>
</dbReference>
<dbReference type="Pfam" id="PF13409">
    <property type="entry name" value="GST_N_2"/>
    <property type="match status" value="1"/>
</dbReference>
<dbReference type="SUPFAM" id="SSF47616">
    <property type="entry name" value="GST C-terminal domain-like"/>
    <property type="match status" value="1"/>
</dbReference>
<dbReference type="SUPFAM" id="SSF52833">
    <property type="entry name" value="Thioredoxin-like"/>
    <property type="match status" value="1"/>
</dbReference>
<dbReference type="PROSITE" id="PS50405">
    <property type="entry name" value="GST_CTER"/>
    <property type="match status" value="1"/>
</dbReference>
<dbReference type="PROSITE" id="PS50404">
    <property type="entry name" value="GST_NTER"/>
    <property type="match status" value="1"/>
</dbReference>
<organism>
    <name type="scientific">Homo sapiens</name>
    <name type="common">Human</name>
    <dbReference type="NCBI Taxonomy" id="9606"/>
    <lineage>
        <taxon>Eukaryota</taxon>
        <taxon>Metazoa</taxon>
        <taxon>Chordata</taxon>
        <taxon>Craniata</taxon>
        <taxon>Vertebrata</taxon>
        <taxon>Euteleostomi</taxon>
        <taxon>Mammalia</taxon>
        <taxon>Eutheria</taxon>
        <taxon>Euarchontoglires</taxon>
        <taxon>Primates</taxon>
        <taxon>Haplorrhini</taxon>
        <taxon>Catarrhini</taxon>
        <taxon>Hominidae</taxon>
        <taxon>Homo</taxon>
    </lineage>
</organism>
<evidence type="ECO:0000269" key="1">
    <source>
    </source>
</evidence>
<evidence type="ECO:0000303" key="2">
    <source>
    </source>
</evidence>
<evidence type="ECO:0000305" key="3"/>
<comment type="alternative products">
    <event type="alternative splicing"/>
    <isoform>
        <id>Q96MZ0-1</id>
        <name>1</name>
        <sequence type="displayed"/>
    </isoform>
    <isoform>
        <id>Q96MZ0-2</id>
        <name>2</name>
        <sequence type="described" ref="VSP_008793 VSP_008794"/>
    </isoform>
    <isoform>
        <id>Q96MZ0-4</id>
        <name>3</name>
        <sequence type="described" ref="VSP_053683"/>
    </isoform>
</comment>
<comment type="similarity">
    <text evidence="3">Belongs to the GST superfamily.</text>
</comment>
<comment type="caution">
    <text evidence="3">While belonging to the GST superfamily, it probably lacks glutathione transferase activity.</text>
</comment>
<protein>
    <recommendedName>
        <fullName>Ganglioside-induced differentiation-associated protein 1-like 1</fullName>
        <shortName>GDAP1-L1</shortName>
    </recommendedName>
</protein>
<gene>
    <name type="primary">GDAP1L1</name>
</gene>
<feature type="chain" id="PRO_0000186040" description="Ganglioside-induced differentiation-associated protein 1-like 1">
    <location>
        <begin position="1"/>
        <end position="367"/>
    </location>
</feature>
<feature type="domain" description="GST N-terminal">
    <location>
        <begin position="45"/>
        <end position="126"/>
    </location>
</feature>
<feature type="domain" description="GST C-terminal">
    <location>
        <begin position="174"/>
        <end position="341"/>
    </location>
</feature>
<feature type="splice variant" id="VSP_053683" description="In isoform 3." evidence="2">
    <original>G</original>
    <variation>GGGRGRCPSGFPAQPLAVPT</variation>
    <location>
        <position position="124"/>
    </location>
</feature>
<feature type="splice variant" id="VSP_008793" description="In isoform 2." evidence="3">
    <original>EHVVALMPEVGSLQHARVLQYRE</original>
    <variation>GPRLAASLELRGANPRGQLGRAQ</variation>
    <location>
        <begin position="125"/>
        <end position="147"/>
    </location>
</feature>
<feature type="splice variant" id="VSP_008794" description="In isoform 2." evidence="3">
    <location>
        <begin position="148"/>
        <end position="367"/>
    </location>
</feature>
<feature type="sequence variant" id="VAR_036556" description="In a colorectal cancer sample; somatic mutation; dbSNP:rs754794599." evidence="1">
    <original>R</original>
    <variation>W</variation>
    <location>
        <position position="141"/>
    </location>
</feature>
<feature type="sequence conflict" description="In Ref. 2; BAB71128." evidence="3" ref="2">
    <original>N</original>
    <variation>S</variation>
    <location>
        <position position="11"/>
    </location>
</feature>
<name>GD1L1_HUMAN</name>